<keyword id="KW-0002">3D-structure</keyword>
<keyword id="KW-0025">Alternative splicing</keyword>
<keyword id="KW-0963">Cytoplasm</keyword>
<keyword id="KW-0903">Direct protein sequencing</keyword>
<keyword id="KW-0274">FAD</keyword>
<keyword id="KW-0285">Flavoprotein</keyword>
<keyword id="KW-0288">FMN</keyword>
<keyword id="KW-0521">NADP</keyword>
<keyword id="KW-0560">Oxidoreductase</keyword>
<keyword id="KW-1267">Proteomics identification</keyword>
<keyword id="KW-1185">Reference proteome</keyword>
<gene>
    <name evidence="1" type="primary">NDOR1</name>
    <name evidence="13" type="synonym">NR1</name>
</gene>
<comment type="function">
    <text evidence="1 3 5 8 10 11 12">NADPH-dependent reductase which is a central component of the cytosolic iron-sulfur (Fe-S) protein assembly (CIA) machinery (PubMed:10625700, PubMed:15900210, PubMed:20802492, PubMed:23596212, PubMed:28648056). Transfers electrons from NADPH via its FAD and FMN prosthetic groups to the [2Fe-2S] cluster of CIAPIN1, another key component of the CIA machinery (PubMed:20802492, PubMed:23596212, PubMed:28648056). In turn, this reduced cluster provides electrons for assembly of cytosolic iron-sulfur cluster proteins (PubMed:20802492, PubMed:23596212). It can also reduce the [2Fe-2S] cluster of CISD1 and activate this protein implicated in Fe/S cluster repair (PubMed:28648056). In vitro can fully activate methionine synthase/MTR in the presence of soluble cytochrome b5/CYB5A (PubMed:12871938).</text>
</comment>
<comment type="catalytic activity">
    <reaction evidence="1 11 12">
        <text>2 oxidized [2Fe-2S]-[protein] + NADPH = 2 reduced [2Fe-2S]-[protein] + NADP(+) + H(+)</text>
        <dbReference type="Rhea" id="RHEA:67716"/>
        <dbReference type="Rhea" id="RHEA-COMP:17327"/>
        <dbReference type="Rhea" id="RHEA-COMP:17328"/>
        <dbReference type="ChEBI" id="CHEBI:15378"/>
        <dbReference type="ChEBI" id="CHEBI:33737"/>
        <dbReference type="ChEBI" id="CHEBI:33738"/>
        <dbReference type="ChEBI" id="CHEBI:57783"/>
        <dbReference type="ChEBI" id="CHEBI:58349"/>
    </reaction>
    <physiologicalReaction direction="left-to-right" evidence="1 18">
        <dbReference type="Rhea" id="RHEA:67717"/>
    </physiologicalReaction>
</comment>
<comment type="cofactor">
    <cofactor evidence="1 3">
        <name>FAD</name>
        <dbReference type="ChEBI" id="CHEBI:57692"/>
    </cofactor>
</comment>
<comment type="cofactor">
    <cofactor evidence="1 3 11">
        <name>FMN</name>
        <dbReference type="ChEBI" id="CHEBI:58210"/>
    </cofactor>
</comment>
<comment type="biophysicochemical properties">
    <kinetics>
        <KM evidence="3">21 uM for cytochrome c</KM>
        <KM evidence="4 8 11">1.08 uM for NADPH</KM>
        <Vmax evidence="3">1.2 umol/min/ug enzyme for cytochrome c reduction</Vmax>
        <Vmax evidence="5">1.98 umol/min/ug enzyme for cytochrome c reduction</Vmax>
        <Vmax evidence="5">2.8 umol/min/ug enzyme for methionine synthase reductive activation</Vmax>
    </kinetics>
    <phDependence>
        <text evidence="17">Optimum pH is about 8.0.</text>
    </phDependence>
    <redoxPotential>
        <text evidence="4">E(0) is -315 +/- 5 mV for the FAD oxidized/semiquinone couple, E(0) is -365 +/- 15 mV for the FAD semiquinone/dihydroquinone couple, E(0) is -146 +/- 5 mV for the FMN oxidized/semiquinone couple, and E(0) is -305 +/- 5 mV for the FMN semiquinone/dihydroquinone couple.</text>
    </redoxPotential>
</comment>
<comment type="subunit">
    <text evidence="1 9 10 11">Interacts with CIAPIN1; as part of the cytosolic iron-sulfur (Fe-S) protein assembly (CIA) machinery (By similarity) (PubMed:20802492, PubMed:23596212). Interacts with DCPS (PubMed:16140270).</text>
</comment>
<comment type="interaction">
    <interactant intactId="EBI-10249760">
        <id>Q9UHB4</id>
    </interactant>
    <interactant intactId="EBI-11028020">
        <id>Q86UT8</id>
        <label>CENATAC</label>
    </interactant>
    <organismsDiffer>false</organismsDiffer>
    <experiments>3</experiments>
</comment>
<comment type="interaction">
    <interactant intactId="EBI-10249760">
        <id>Q9UHB4</id>
    </interactant>
    <interactant intactId="EBI-750511">
        <id>Q6FI81</id>
        <label>CIAPIN1</label>
    </interactant>
    <organismsDiffer>false</organismsDiffer>
    <experiments>16</experiments>
</comment>
<comment type="interaction">
    <interactant intactId="EBI-10249760">
        <id>Q9UHB4</id>
    </interactant>
    <interactant intactId="EBI-2349927">
        <id>Q5JST6</id>
        <label>EFHC2</label>
    </interactant>
    <organismsDiffer>false</organismsDiffer>
    <experiments>3</experiments>
</comment>
<comment type="interaction">
    <interactant intactId="EBI-10249760">
        <id>Q9UHB4</id>
    </interactant>
    <interactant intactId="EBI-1052570">
        <id>O95995</id>
        <label>GAS8</label>
    </interactant>
    <organismsDiffer>false</organismsDiffer>
    <experiments>3</experiments>
</comment>
<comment type="interaction">
    <interactant intactId="EBI-10249760">
        <id>Q9UHB4</id>
    </interactant>
    <interactant intactId="EBI-374781">
        <id>O76003</id>
        <label>GLRX3</label>
    </interactant>
    <organismsDiffer>false</organismsDiffer>
    <experiments>2</experiments>
</comment>
<comment type="interaction">
    <interactant intactId="EBI-10249760">
        <id>Q9UHB4</id>
    </interactant>
    <interactant intactId="EBI-713355">
        <id>Q13227</id>
        <label>GPS2</label>
    </interactant>
    <organismsDiffer>false</organismsDiffer>
    <experiments>5</experiments>
</comment>
<comment type="interaction">
    <interactant intactId="EBI-10249760">
        <id>Q9UHB4</id>
    </interactant>
    <interactant intactId="EBI-5329558">
        <id>P14652</id>
        <label>HOXB2</label>
    </interactant>
    <organismsDiffer>false</organismsDiffer>
    <experiments>3</experiments>
</comment>
<comment type="interaction">
    <interactant intactId="EBI-10249760">
        <id>Q9UHB4</id>
    </interactant>
    <interactant intactId="EBI-739493">
        <id>Q6ZU52</id>
        <label>KIAA0408</label>
    </interactant>
    <organismsDiffer>false</organismsDiffer>
    <experiments>3</experiments>
</comment>
<comment type="interaction">
    <interactant intactId="EBI-10249760">
        <id>Q9UHB4</id>
    </interactant>
    <interactant intactId="EBI-11959475">
        <id>P25791-3</id>
        <label>LMO2</label>
    </interactant>
    <organismsDiffer>false</organismsDiffer>
    <experiments>3</experiments>
</comment>
<comment type="interaction">
    <interactant intactId="EBI-10249760">
        <id>Q9UHB4</id>
    </interactant>
    <interactant intactId="EBI-11742507">
        <id>Q8TAP4-4</id>
        <label>LMO3</label>
    </interactant>
    <organismsDiffer>false</organismsDiffer>
    <experiments>3</experiments>
</comment>
<comment type="interaction">
    <interactant intactId="EBI-10249760">
        <id>Q9UHB4</id>
    </interactant>
    <interactant intactId="EBI-739832">
        <id>Q8TBB1</id>
        <label>LNX1</label>
    </interactant>
    <organismsDiffer>false</organismsDiffer>
    <experiments>3</experiments>
</comment>
<comment type="interaction">
    <interactant intactId="EBI-10249760">
        <id>Q9UHB4</id>
    </interactant>
    <interactant intactId="EBI-2864512">
        <id>P50221</id>
        <label>MEOX1</label>
    </interactant>
    <organismsDiffer>false</organismsDiffer>
    <experiments>3</experiments>
</comment>
<comment type="interaction">
    <interactant intactId="EBI-10249760">
        <id>Q9UHB4</id>
    </interactant>
    <interactant intactId="EBI-742948">
        <id>Q5JR59</id>
        <label>MTUS2</label>
    </interactant>
    <organismsDiffer>false</organismsDiffer>
    <experiments>4</experiments>
</comment>
<comment type="interaction">
    <interactant intactId="EBI-10249760">
        <id>Q9UHB4</id>
    </interactant>
    <interactant intactId="EBI-11522433">
        <id>Q5JR59-3</id>
        <label>MTUS2</label>
    </interactant>
    <organismsDiffer>false</organismsDiffer>
    <experiments>3</experiments>
</comment>
<comment type="interaction">
    <interactant intactId="EBI-10249760">
        <id>Q9UHB4</id>
    </interactant>
    <interactant intactId="EBI-8641936">
        <id>Q15742</id>
        <label>NAB2</label>
    </interactant>
    <organismsDiffer>false</organismsDiffer>
    <experiments>3</experiments>
</comment>
<comment type="interaction">
    <interactant intactId="EBI-10249760">
        <id>Q9UHB4</id>
    </interactant>
    <interactant intactId="EBI-366978">
        <id>Q9UBE8</id>
        <label>NLK</label>
    </interactant>
    <organismsDiffer>false</organismsDiffer>
    <experiments>3</experiments>
</comment>
<comment type="interaction">
    <interactant intactId="EBI-10249760">
        <id>Q9UHB4</id>
    </interactant>
    <interactant intactId="EBI-359288">
        <id>P28072</id>
        <label>PSMB6</label>
    </interactant>
    <organismsDiffer>false</organismsDiffer>
    <experiments>3</experiments>
</comment>
<comment type="interaction">
    <interactant intactId="EBI-10249760">
        <id>Q9UHB4</id>
    </interactant>
    <interactant intactId="EBI-533224">
        <id>P15884</id>
        <label>TCF4</label>
    </interactant>
    <organismsDiffer>false</organismsDiffer>
    <experiments>4</experiments>
</comment>
<comment type="interaction">
    <interactant intactId="EBI-10249760">
        <id>Q9UHB4</id>
    </interactant>
    <interactant intactId="EBI-13636688">
        <id>P15884-3</id>
        <label>TCF4</label>
    </interactant>
    <organismsDiffer>false</organismsDiffer>
    <experiments>3</experiments>
</comment>
<comment type="interaction">
    <interactant intactId="EBI-10249760">
        <id>Q9UHB4</id>
    </interactant>
    <interactant intactId="EBI-740781">
        <id>Q9BT92</id>
        <label>TCHP</label>
    </interactant>
    <organismsDiffer>false</organismsDiffer>
    <experiments>7</experiments>
</comment>
<comment type="interaction">
    <interactant intactId="EBI-10249760">
        <id>Q9UHB4</id>
    </interactant>
    <interactant intactId="EBI-11139477">
        <id>Q96N21</id>
        <label>TEPSIN</label>
    </interactant>
    <organismsDiffer>false</organismsDiffer>
    <experiments>3</experiments>
</comment>
<comment type="interaction">
    <interactant intactId="EBI-10249760">
        <id>Q9UHB4</id>
    </interactant>
    <interactant intactId="EBI-11741437">
        <id>Q08117-2</id>
        <label>TLE5</label>
    </interactant>
    <organismsDiffer>false</organismsDiffer>
    <experiments>3</experiments>
</comment>
<comment type="interaction">
    <interactant intactId="EBI-10249760">
        <id>Q9UHB4</id>
    </interactant>
    <interactant intactId="EBI-741480">
        <id>Q9UMX0</id>
        <label>UBQLN1</label>
    </interactant>
    <organismsDiffer>false</organismsDiffer>
    <experiments>3</experiments>
</comment>
<comment type="interaction">
    <interactant intactId="EBI-10249760">
        <id>Q9UHB4</id>
    </interactant>
    <interactant intactId="EBI-947187">
        <id>Q9UHD9</id>
        <label>UBQLN2</label>
    </interactant>
    <organismsDiffer>false</organismsDiffer>
    <experiments>3</experiments>
</comment>
<comment type="interaction">
    <interactant intactId="EBI-10249760">
        <id>Q9UHB4</id>
    </interactant>
    <interactant intactId="EBI-12287587">
        <id>B2RXF5</id>
        <label>ZBTB42</label>
    </interactant>
    <organismsDiffer>false</organismsDiffer>
    <experiments>5</experiments>
</comment>
<comment type="interaction">
    <interactant intactId="EBI-10249760">
        <id>Q9UHB4</id>
    </interactant>
    <interactant intactId="EBI-14104088">
        <id>Q53FD0-2</id>
        <label>ZC2HC1C</label>
    </interactant>
    <organismsDiffer>false</organismsDiffer>
    <experiments>3</experiments>
</comment>
<comment type="interaction">
    <interactant intactId="EBI-10249760">
        <id>Q9UHB4</id>
    </interactant>
    <interactant intactId="EBI-4395669">
        <id>Q6ZNG0</id>
        <label>ZNF620</label>
    </interactant>
    <organismsDiffer>false</organismsDiffer>
    <experiments>3</experiments>
</comment>
<comment type="interaction">
    <interactant intactId="EBI-10249760">
        <id>Q9UHB4</id>
    </interactant>
    <interactant intactId="EBI-10251462">
        <id>Q6NX45</id>
        <label>ZNF774</label>
    </interactant>
    <organismsDiffer>false</organismsDiffer>
    <experiments>3</experiments>
</comment>
<comment type="subcellular location">
    <subcellularLocation>
        <location evidence="1 3 6">Cytoplasm</location>
        <location evidence="1 3 6">Perinuclear region</location>
    </subcellularLocation>
    <text evidence="1 6">Concentrated in perinuclear structure.</text>
</comment>
<comment type="alternative products">
    <event type="alternative splicing"/>
    <isoform>
        <id>Q9UHB4-1</id>
        <name>1</name>
        <sequence type="displayed"/>
    </isoform>
    <isoform>
        <id>Q9UHB4-2</id>
        <name>2</name>
        <sequence type="described" ref="VSP_031487"/>
    </isoform>
    <isoform>
        <id>Q9UHB4-3</id>
        <name>3</name>
        <sequence type="described" ref="VSP_046313 VSP_046314"/>
    </isoform>
    <isoform>
        <id>Q9UHB4-4</id>
        <name>4</name>
        <sequence type="described" ref="VSP_053807"/>
    </isoform>
</comment>
<comment type="tissue specificity">
    <text evidence="6">Low expression in brain, heart, kidney, pancreas, prostate and skeletal muscle. Highest levels in the placenta. Expressed in cancer cell lines including promyelocytic leukemia, HeLaS3, chronic myelagenous leukemia, lymphoblastic leukemia, Burkitt's lymphoma, colorectal adenocarcinoma, lung carcinoma, and melanoma G-361.</text>
</comment>
<comment type="similarity">
    <text evidence="1">Belongs to the NADPH-dependent diflavin oxidoreductase NDOR1 family.</text>
</comment>
<comment type="similarity">
    <text evidence="1">In the N-terminal section; belongs to the flavodoxin family.</text>
</comment>
<comment type="similarity">
    <text evidence="1">In the C-terminal section; belongs to the flavoprotein pyridine nucleotide cytochrome reductase family.</text>
</comment>
<feature type="chain" id="PRO_0000319539" description="NADPH-dependent diflavin oxidoreductase 1">
    <location>
        <begin position="1"/>
        <end position="597"/>
    </location>
</feature>
<feature type="domain" description="Flavodoxin-like" evidence="1">
    <location>
        <begin position="6"/>
        <end position="150"/>
    </location>
</feature>
<feature type="domain" description="FAD-binding FR-type" evidence="1">
    <location>
        <begin position="206"/>
        <end position="447"/>
    </location>
</feature>
<feature type="region of interest" description="Disordered" evidence="2">
    <location>
        <begin position="188"/>
        <end position="207"/>
    </location>
</feature>
<feature type="binding site" evidence="1 11">
    <location>
        <begin position="12"/>
        <end position="17"/>
    </location>
    <ligand>
        <name>FMN</name>
        <dbReference type="ChEBI" id="CHEBI:58210"/>
    </ligand>
</feature>
<feature type="binding site" evidence="1 11">
    <location>
        <begin position="59"/>
        <end position="62"/>
    </location>
    <ligand>
        <name>FMN</name>
        <dbReference type="ChEBI" id="CHEBI:58210"/>
    </ligand>
</feature>
<feature type="binding site" evidence="1 11">
    <location>
        <begin position="97"/>
        <end position="106"/>
    </location>
    <ligand>
        <name>FMN</name>
        <dbReference type="ChEBI" id="CHEBI:58210"/>
    </ligand>
</feature>
<feature type="binding site" evidence="1 11">
    <location>
        <position position="132"/>
    </location>
    <ligand>
        <name>FMN</name>
        <dbReference type="ChEBI" id="CHEBI:58210"/>
    </ligand>
</feature>
<feature type="binding site" evidence="1">
    <location>
        <position position="350"/>
    </location>
    <ligand>
        <name>FAD</name>
        <dbReference type="ChEBI" id="CHEBI:57692"/>
    </ligand>
</feature>
<feature type="binding site" evidence="1">
    <location>
        <begin position="382"/>
        <end position="385"/>
    </location>
    <ligand>
        <name>FAD</name>
        <dbReference type="ChEBI" id="CHEBI:57692"/>
    </ligand>
</feature>
<feature type="binding site" evidence="1">
    <location>
        <begin position="416"/>
        <end position="419"/>
    </location>
    <ligand>
        <name>FAD</name>
        <dbReference type="ChEBI" id="CHEBI:57692"/>
    </ligand>
</feature>
<feature type="binding site" evidence="1">
    <location>
        <position position="460"/>
    </location>
    <ligand>
        <name>NADP(+)</name>
        <dbReference type="ChEBI" id="CHEBI:58349"/>
    </ligand>
</feature>
<feature type="binding site" evidence="1">
    <location>
        <begin position="515"/>
        <end position="516"/>
    </location>
    <ligand>
        <name>NADP(+)</name>
        <dbReference type="ChEBI" id="CHEBI:58349"/>
    </ligand>
</feature>
<feature type="binding site" evidence="1">
    <location>
        <begin position="521"/>
        <end position="525"/>
    </location>
    <ligand>
        <name>NADP(+)</name>
        <dbReference type="ChEBI" id="CHEBI:58349"/>
    </ligand>
</feature>
<feature type="binding site" evidence="1">
    <location>
        <position position="558"/>
    </location>
    <ligand>
        <name>NADP(+)</name>
        <dbReference type="ChEBI" id="CHEBI:58349"/>
    </ligand>
</feature>
<feature type="binding site" evidence="1">
    <location>
        <position position="596"/>
    </location>
    <ligand>
        <name>FAD</name>
        <dbReference type="ChEBI" id="CHEBI:57692"/>
    </ligand>
</feature>
<feature type="splice variant" id="VSP_046313" description="In isoform 3." evidence="15">
    <location>
        <begin position="138"/>
        <end position="171"/>
    </location>
</feature>
<feature type="splice variant" id="VSP_053807" description="In isoform 4." evidence="16">
    <location>
        <begin position="392"/>
        <end position="398"/>
    </location>
</feature>
<feature type="splice variant" id="VSP_031487" description="In isoform 2." evidence="14">
    <original>Q</original>
    <variation>QPPALFSALQ</variation>
    <location>
        <position position="518"/>
    </location>
</feature>
<feature type="splice variant" id="VSP_046314" description="In isoform 3." evidence="15">
    <original>GAYFYLAGNAKSMPADVSEALMSIFQEEGGLCSPDAAAYLARLQQTRRFQTETWA</original>
    <variation>ATPSPCQRTSRKP</variation>
    <location>
        <begin position="543"/>
        <end position="597"/>
    </location>
</feature>
<feature type="sequence variant" id="VAR_039010" description="In allele NDOR1*1; shows a decrease in affinity for NADPH and a reduction in ferricyanide reductase activity; dbSNP:rs62587579." evidence="7 8">
    <original>V</original>
    <variation>I</variation>
    <location>
        <position position="522"/>
    </location>
</feature>
<feature type="strand" evidence="19">
    <location>
        <begin position="5"/>
        <end position="11"/>
    </location>
</feature>
<feature type="strand" evidence="19">
    <location>
        <begin position="13"/>
        <end position="15"/>
    </location>
</feature>
<feature type="helix" evidence="19">
    <location>
        <begin position="16"/>
        <end position="30"/>
    </location>
</feature>
<feature type="strand" evidence="19">
    <location>
        <begin position="34"/>
        <end position="39"/>
    </location>
</feature>
<feature type="turn" evidence="19">
    <location>
        <begin position="40"/>
        <end position="42"/>
    </location>
</feature>
<feature type="helix" evidence="19">
    <location>
        <begin position="45"/>
        <end position="50"/>
    </location>
</feature>
<feature type="strand" evidence="19">
    <location>
        <begin position="52"/>
        <end position="59"/>
    </location>
</feature>
<feature type="helix" evidence="19">
    <location>
        <begin position="62"/>
        <end position="64"/>
    </location>
</feature>
<feature type="helix" evidence="19">
    <location>
        <begin position="68"/>
        <end position="70"/>
    </location>
</feature>
<feature type="helix" evidence="19">
    <location>
        <begin position="71"/>
        <end position="77"/>
    </location>
</feature>
<feature type="turn" evidence="19">
    <location>
        <begin position="84"/>
        <end position="89"/>
    </location>
</feature>
<feature type="strand" evidence="19">
    <location>
        <begin position="91"/>
        <end position="98"/>
    </location>
</feature>
<feature type="strand" evidence="19">
    <location>
        <begin position="102"/>
        <end position="104"/>
    </location>
</feature>
<feature type="helix" evidence="19">
    <location>
        <begin position="107"/>
        <end position="118"/>
    </location>
</feature>
<feature type="strand" evidence="19">
    <location>
        <begin position="122"/>
        <end position="125"/>
    </location>
</feature>
<feature type="strand" evidence="19">
    <location>
        <begin position="128"/>
        <end position="131"/>
    </location>
</feature>
<feature type="turn" evidence="19">
    <location>
        <begin position="135"/>
        <end position="138"/>
    </location>
</feature>
<feature type="helix" evidence="19">
    <location>
        <begin position="139"/>
        <end position="156"/>
    </location>
</feature>
<name>NDOR1_HUMAN</name>
<protein>
    <recommendedName>
        <fullName evidence="1">NADPH-dependent diflavin oxidoreductase 1</fullName>
        <ecNumber evidence="1 11 12">1.18.1.-</ecNumber>
    </recommendedName>
    <alternativeName>
        <fullName evidence="1">NADPH-dependent FMN and FAD-containing oxidoreductase</fullName>
    </alternativeName>
    <alternativeName>
        <fullName evidence="13">Novel reductase 1</fullName>
    </alternativeName>
</protein>
<dbReference type="EC" id="1.18.1.-" evidence="1 11 12"/>
<dbReference type="EMBL" id="AF199509">
    <property type="protein sequence ID" value="AAF25205.1"/>
    <property type="molecule type" value="mRNA"/>
</dbReference>
<dbReference type="EMBL" id="AY077845">
    <property type="protein sequence ID" value="AAL77754.1"/>
    <property type="molecule type" value="mRNA"/>
</dbReference>
<dbReference type="EMBL" id="AK074403">
    <property type="status" value="NOT_ANNOTATED_CDS"/>
    <property type="molecule type" value="mRNA"/>
</dbReference>
<dbReference type="EMBL" id="AK290026">
    <property type="protein sequence ID" value="BAF82715.1"/>
    <property type="molecule type" value="mRNA"/>
</dbReference>
<dbReference type="EMBL" id="AL929554">
    <property type="status" value="NOT_ANNOTATED_CDS"/>
    <property type="molecule type" value="Genomic_DNA"/>
</dbReference>
<dbReference type="EMBL" id="BX255925">
    <property type="status" value="NOT_ANNOTATED_CDS"/>
    <property type="molecule type" value="Genomic_DNA"/>
</dbReference>
<dbReference type="EMBL" id="BC015735">
    <property type="protein sequence ID" value="AAH15735.1"/>
    <property type="molecule type" value="mRNA"/>
</dbReference>
<dbReference type="EMBL" id="BC093782">
    <property type="protein sequence ID" value="AAH93782.1"/>
    <property type="molecule type" value="mRNA"/>
</dbReference>
<dbReference type="EMBL" id="BC111943">
    <property type="protein sequence ID" value="AAI11944.1"/>
    <property type="molecule type" value="mRNA"/>
</dbReference>
<dbReference type="CCDS" id="CCDS48061.1">
    <molecule id="Q9UHB4-2"/>
</dbReference>
<dbReference type="CCDS" id="CCDS48062.1">
    <molecule id="Q9UHB4-4"/>
</dbReference>
<dbReference type="CCDS" id="CCDS48063.1">
    <molecule id="Q9UHB4-3"/>
</dbReference>
<dbReference type="CCDS" id="CCDS7036.1">
    <molecule id="Q9UHB4-1"/>
</dbReference>
<dbReference type="RefSeq" id="NP_001137498.1">
    <molecule id="Q9UHB4-2"/>
    <property type="nucleotide sequence ID" value="NM_001144026.3"/>
</dbReference>
<dbReference type="RefSeq" id="NP_001137499.1">
    <molecule id="Q9UHB4-3"/>
    <property type="nucleotide sequence ID" value="NM_001144027.3"/>
</dbReference>
<dbReference type="RefSeq" id="NP_001137500.1">
    <molecule id="Q9UHB4-4"/>
    <property type="nucleotide sequence ID" value="NM_001144028.3"/>
</dbReference>
<dbReference type="RefSeq" id="NP_055249.1">
    <molecule id="Q9UHB4-1"/>
    <property type="nucleotide sequence ID" value="NM_014434.4"/>
</dbReference>
<dbReference type="PDB" id="4H2D">
    <property type="method" value="X-ray"/>
    <property type="resolution" value="1.80 A"/>
    <property type="chains" value="A/B=1-161"/>
</dbReference>
<dbReference type="PDBsum" id="4H2D"/>
<dbReference type="SMR" id="Q9UHB4"/>
<dbReference type="BioGRID" id="118038">
    <property type="interactions" value="54"/>
</dbReference>
<dbReference type="FunCoup" id="Q9UHB4">
    <property type="interactions" value="2917"/>
</dbReference>
<dbReference type="IntAct" id="Q9UHB4">
    <property type="interactions" value="41"/>
</dbReference>
<dbReference type="STRING" id="9606.ENSP00000360576"/>
<dbReference type="GlyCosmos" id="Q9UHB4">
    <property type="glycosylation" value="2 sites, 1 glycan"/>
</dbReference>
<dbReference type="GlyGen" id="Q9UHB4">
    <property type="glycosylation" value="2 sites, 1 O-linked glycan (2 sites)"/>
</dbReference>
<dbReference type="iPTMnet" id="Q9UHB4"/>
<dbReference type="PhosphoSitePlus" id="Q9UHB4"/>
<dbReference type="BioMuta" id="NDOR1"/>
<dbReference type="DMDM" id="74735011"/>
<dbReference type="jPOST" id="Q9UHB4"/>
<dbReference type="MassIVE" id="Q9UHB4"/>
<dbReference type="PaxDb" id="9606-ENSP00000360576"/>
<dbReference type="PeptideAtlas" id="Q9UHB4"/>
<dbReference type="ProteomicsDB" id="12813"/>
<dbReference type="ProteomicsDB" id="12819"/>
<dbReference type="ProteomicsDB" id="84294">
    <molecule id="Q9UHB4-1"/>
</dbReference>
<dbReference type="ProteomicsDB" id="84295">
    <molecule id="Q9UHB4-2"/>
</dbReference>
<dbReference type="Pumba" id="Q9UHB4"/>
<dbReference type="Antibodypedia" id="18959">
    <property type="antibodies" value="224 antibodies from 25 providers"/>
</dbReference>
<dbReference type="DNASU" id="27158"/>
<dbReference type="Ensembl" id="ENST00000371521.8">
    <molecule id="Q9UHB4-2"/>
    <property type="protein sequence ID" value="ENSP00000360576.4"/>
    <property type="gene ID" value="ENSG00000188566.15"/>
</dbReference>
<dbReference type="Ensembl" id="ENST00000427047.6">
    <molecule id="Q9UHB4-3"/>
    <property type="protein sequence ID" value="ENSP00000394309.1"/>
    <property type="gene ID" value="ENSG00000188566.15"/>
</dbReference>
<dbReference type="Ensembl" id="ENST00000458322.2">
    <molecule id="Q9UHB4-4"/>
    <property type="protein sequence ID" value="ENSP00000389905.1"/>
    <property type="gene ID" value="ENSG00000188566.15"/>
</dbReference>
<dbReference type="Ensembl" id="ENST00000684003.1">
    <molecule id="Q9UHB4-1"/>
    <property type="protein sequence ID" value="ENSP00000507194.1"/>
    <property type="gene ID" value="ENSG00000188566.15"/>
</dbReference>
<dbReference type="GeneID" id="27158"/>
<dbReference type="KEGG" id="hsa:27158"/>
<dbReference type="MANE-Select" id="ENST00000684003.1">
    <property type="protein sequence ID" value="ENSP00000507194.1"/>
    <property type="RefSeq nucleotide sequence ID" value="NM_014434.4"/>
    <property type="RefSeq protein sequence ID" value="NP_055249.1"/>
</dbReference>
<dbReference type="UCSC" id="uc004clw.4">
    <molecule id="Q9UHB4-1"/>
    <property type="organism name" value="human"/>
</dbReference>
<dbReference type="AGR" id="HGNC:29838"/>
<dbReference type="CTD" id="27158"/>
<dbReference type="DisGeNET" id="27158"/>
<dbReference type="GeneCards" id="NDOR1"/>
<dbReference type="HGNC" id="HGNC:29838">
    <property type="gene designation" value="NDOR1"/>
</dbReference>
<dbReference type="HPA" id="ENSG00000188566">
    <property type="expression patterns" value="Low tissue specificity"/>
</dbReference>
<dbReference type="MIM" id="606073">
    <property type="type" value="gene"/>
</dbReference>
<dbReference type="neXtProt" id="NX_Q9UHB4"/>
<dbReference type="OpenTargets" id="ENSG00000188566"/>
<dbReference type="PharmGKB" id="PA134885020"/>
<dbReference type="VEuPathDB" id="HostDB:ENSG00000188566"/>
<dbReference type="eggNOG" id="KOG1159">
    <property type="taxonomic scope" value="Eukaryota"/>
</dbReference>
<dbReference type="GeneTree" id="ENSGT00930000151050"/>
<dbReference type="HOGENOM" id="CLU_001570_17_6_1"/>
<dbReference type="InParanoid" id="Q9UHB4"/>
<dbReference type="OMA" id="DIMSIPR"/>
<dbReference type="OrthoDB" id="1856718at2759"/>
<dbReference type="PAN-GO" id="Q9UHB4">
    <property type="GO annotations" value="4 GO annotations based on evolutionary models"/>
</dbReference>
<dbReference type="PhylomeDB" id="Q9UHB4"/>
<dbReference type="TreeFam" id="TF105716"/>
<dbReference type="BRENDA" id="1.5.1.30">
    <property type="organism ID" value="2681"/>
</dbReference>
<dbReference type="PathwayCommons" id="Q9UHB4"/>
<dbReference type="Reactome" id="R-HSA-2564830">
    <property type="pathway name" value="Cytosolic iron-sulfur cluster assembly"/>
</dbReference>
<dbReference type="SignaLink" id="Q9UHB4"/>
<dbReference type="BioGRID-ORCS" id="27158">
    <property type="hits" value="656 hits in 1148 CRISPR screens"/>
</dbReference>
<dbReference type="ChiTaRS" id="NDOR1">
    <property type="organism name" value="human"/>
</dbReference>
<dbReference type="EvolutionaryTrace" id="Q9UHB4"/>
<dbReference type="GeneWiki" id="NDOR1"/>
<dbReference type="GenomeRNAi" id="27158"/>
<dbReference type="Pharos" id="Q9UHB4">
    <property type="development level" value="Tbio"/>
</dbReference>
<dbReference type="PRO" id="PR:Q9UHB4"/>
<dbReference type="Proteomes" id="UP000005640">
    <property type="component" value="Chromosome 9"/>
</dbReference>
<dbReference type="RNAct" id="Q9UHB4">
    <property type="molecule type" value="protein"/>
</dbReference>
<dbReference type="Bgee" id="ENSG00000188566">
    <property type="expression patterns" value="Expressed in granulocyte and 94 other cell types or tissues"/>
</dbReference>
<dbReference type="GO" id="GO:0005737">
    <property type="term" value="C:cytoplasm"/>
    <property type="evidence" value="ECO:0000314"/>
    <property type="project" value="UniProtKB"/>
</dbReference>
<dbReference type="GO" id="GO:0005829">
    <property type="term" value="C:cytosol"/>
    <property type="evidence" value="ECO:0000314"/>
    <property type="project" value="HPA"/>
</dbReference>
<dbReference type="GO" id="GO:0045111">
    <property type="term" value="C:intermediate filament cytoskeleton"/>
    <property type="evidence" value="ECO:0000314"/>
    <property type="project" value="HPA"/>
</dbReference>
<dbReference type="GO" id="GO:0005654">
    <property type="term" value="C:nucleoplasm"/>
    <property type="evidence" value="ECO:0000314"/>
    <property type="project" value="HPA"/>
</dbReference>
<dbReference type="GO" id="GO:0048471">
    <property type="term" value="C:perinuclear region of cytoplasm"/>
    <property type="evidence" value="ECO:0007669"/>
    <property type="project" value="UniProtKB-SubCell"/>
</dbReference>
<dbReference type="GO" id="GO:0009055">
    <property type="term" value="F:electron transfer activity"/>
    <property type="evidence" value="ECO:0000314"/>
    <property type="project" value="UniProtKB"/>
</dbReference>
<dbReference type="GO" id="GO:0071949">
    <property type="term" value="F:FAD binding"/>
    <property type="evidence" value="ECO:0000314"/>
    <property type="project" value="UniProtKB"/>
</dbReference>
<dbReference type="GO" id="GO:0050660">
    <property type="term" value="F:flavin adenine dinucleotide binding"/>
    <property type="evidence" value="ECO:0000318"/>
    <property type="project" value="GO_Central"/>
</dbReference>
<dbReference type="GO" id="GO:0010181">
    <property type="term" value="F:FMN binding"/>
    <property type="evidence" value="ECO:0000314"/>
    <property type="project" value="UniProtKB"/>
</dbReference>
<dbReference type="GO" id="GO:0050661">
    <property type="term" value="F:NADP binding"/>
    <property type="evidence" value="ECO:0000314"/>
    <property type="project" value="UniProtKB"/>
</dbReference>
<dbReference type="GO" id="GO:0070402">
    <property type="term" value="F:NADPH binding"/>
    <property type="evidence" value="ECO:0000314"/>
    <property type="project" value="UniProtKB"/>
</dbReference>
<dbReference type="GO" id="GO:0003958">
    <property type="term" value="F:NADPH-hemoprotein reductase activity"/>
    <property type="evidence" value="ECO:0000314"/>
    <property type="project" value="UniProtKB"/>
</dbReference>
<dbReference type="GO" id="GO:0160246">
    <property type="term" value="F:NADPH-iron-sulfur [2Fe-2S] protein oxidoreductase activity"/>
    <property type="evidence" value="ECO:0000314"/>
    <property type="project" value="UniProtKB"/>
</dbReference>
<dbReference type="GO" id="GO:0016491">
    <property type="term" value="F:oxidoreductase activity"/>
    <property type="evidence" value="ECO:0000318"/>
    <property type="project" value="GO_Central"/>
</dbReference>
<dbReference type="GO" id="GO:0016653">
    <property type="term" value="F:oxidoreductase activity, acting on NAD(P)H, heme protein as acceptor"/>
    <property type="evidence" value="ECO:0000314"/>
    <property type="project" value="UniProtKB"/>
</dbReference>
<dbReference type="GO" id="GO:0022900">
    <property type="term" value="P:electron transport chain"/>
    <property type="evidence" value="ECO:0000314"/>
    <property type="project" value="UniProtKB"/>
</dbReference>
<dbReference type="GO" id="GO:0016226">
    <property type="term" value="P:iron-sulfur cluster assembly"/>
    <property type="evidence" value="ECO:0000304"/>
    <property type="project" value="ARUK-UCL"/>
</dbReference>
<dbReference type="FunFam" id="1.20.990.10:FF:000008">
    <property type="entry name" value="NADPH-dependent diflavin oxidoreductase 1"/>
    <property type="match status" value="1"/>
</dbReference>
<dbReference type="FunFam" id="3.40.50.360:FF:000015">
    <property type="entry name" value="NADPH-dependent diflavin oxidoreductase 1"/>
    <property type="match status" value="1"/>
</dbReference>
<dbReference type="FunFam" id="3.40.50.80:FF:000055">
    <property type="entry name" value="NADPH-dependent diflavin oxidoreductase 1"/>
    <property type="match status" value="1"/>
</dbReference>
<dbReference type="Gene3D" id="3.40.50.360">
    <property type="match status" value="1"/>
</dbReference>
<dbReference type="Gene3D" id="1.20.990.10">
    <property type="entry name" value="NADPH-cytochrome p450 Reductase, Chain A, domain 3"/>
    <property type="match status" value="1"/>
</dbReference>
<dbReference type="Gene3D" id="3.40.50.80">
    <property type="entry name" value="Nucleotide-binding domain of ferredoxin-NADP reductase (FNR) module"/>
    <property type="match status" value="1"/>
</dbReference>
<dbReference type="Gene3D" id="2.40.30.10">
    <property type="entry name" value="Translation factors"/>
    <property type="match status" value="1"/>
</dbReference>
<dbReference type="HAMAP" id="MF_03178">
    <property type="entry name" value="NDOR1"/>
    <property type="match status" value="1"/>
</dbReference>
<dbReference type="InterPro" id="IPR003097">
    <property type="entry name" value="CysJ-like_FAD-binding"/>
</dbReference>
<dbReference type="InterPro" id="IPR017927">
    <property type="entry name" value="FAD-bd_FR_type"/>
</dbReference>
<dbReference type="InterPro" id="IPR001094">
    <property type="entry name" value="Flavdoxin-like"/>
</dbReference>
<dbReference type="InterPro" id="IPR008254">
    <property type="entry name" value="Flavodoxin/NO_synth"/>
</dbReference>
<dbReference type="InterPro" id="IPR001709">
    <property type="entry name" value="Flavoprot_Pyr_Nucl_cyt_Rdtase"/>
</dbReference>
<dbReference type="InterPro" id="IPR029039">
    <property type="entry name" value="Flavoprotein-like_sf"/>
</dbReference>
<dbReference type="InterPro" id="IPR039261">
    <property type="entry name" value="FNR_nucleotide-bd"/>
</dbReference>
<dbReference type="InterPro" id="IPR023173">
    <property type="entry name" value="NADPH_Cyt_P450_Rdtase_alpha"/>
</dbReference>
<dbReference type="InterPro" id="IPR028879">
    <property type="entry name" value="NDOR1"/>
</dbReference>
<dbReference type="InterPro" id="IPR001433">
    <property type="entry name" value="OxRdtase_FAD/NAD-bd"/>
</dbReference>
<dbReference type="InterPro" id="IPR017938">
    <property type="entry name" value="Riboflavin_synthase-like_b-brl"/>
</dbReference>
<dbReference type="PANTHER" id="PTHR19384:SF10">
    <property type="entry name" value="NADPH-DEPENDENT DIFLAVIN OXIDOREDUCTASE 1"/>
    <property type="match status" value="1"/>
</dbReference>
<dbReference type="PANTHER" id="PTHR19384">
    <property type="entry name" value="NITRIC OXIDE SYNTHASE-RELATED"/>
    <property type="match status" value="1"/>
</dbReference>
<dbReference type="Pfam" id="PF00667">
    <property type="entry name" value="FAD_binding_1"/>
    <property type="match status" value="1"/>
</dbReference>
<dbReference type="Pfam" id="PF00258">
    <property type="entry name" value="Flavodoxin_1"/>
    <property type="match status" value="1"/>
</dbReference>
<dbReference type="Pfam" id="PF00175">
    <property type="entry name" value="NAD_binding_1"/>
    <property type="match status" value="1"/>
</dbReference>
<dbReference type="PRINTS" id="PR00369">
    <property type="entry name" value="FLAVODOXIN"/>
</dbReference>
<dbReference type="PRINTS" id="PR00371">
    <property type="entry name" value="FPNCR"/>
</dbReference>
<dbReference type="SUPFAM" id="SSF52343">
    <property type="entry name" value="Ferredoxin reductase-like, C-terminal NADP-linked domain"/>
    <property type="match status" value="1"/>
</dbReference>
<dbReference type="SUPFAM" id="SSF52218">
    <property type="entry name" value="Flavoproteins"/>
    <property type="match status" value="1"/>
</dbReference>
<dbReference type="SUPFAM" id="SSF63380">
    <property type="entry name" value="Riboflavin synthase domain-like"/>
    <property type="match status" value="1"/>
</dbReference>
<dbReference type="PROSITE" id="PS51384">
    <property type="entry name" value="FAD_FR"/>
    <property type="match status" value="1"/>
</dbReference>
<dbReference type="PROSITE" id="PS50902">
    <property type="entry name" value="FLAVODOXIN_LIKE"/>
    <property type="match status" value="1"/>
</dbReference>
<evidence type="ECO:0000255" key="1">
    <source>
        <dbReference type="HAMAP-Rule" id="MF_03178"/>
    </source>
</evidence>
<evidence type="ECO:0000256" key="2">
    <source>
        <dbReference type="SAM" id="MobiDB-lite"/>
    </source>
</evidence>
<evidence type="ECO:0000269" key="3">
    <source>
    </source>
</evidence>
<evidence type="ECO:0000269" key="4">
    <source>
    </source>
</evidence>
<evidence type="ECO:0000269" key="5">
    <source>
    </source>
</evidence>
<evidence type="ECO:0000269" key="6">
    <source>
    </source>
</evidence>
<evidence type="ECO:0000269" key="7">
    <source>
    </source>
</evidence>
<evidence type="ECO:0000269" key="8">
    <source>
    </source>
</evidence>
<evidence type="ECO:0000269" key="9">
    <source>
    </source>
</evidence>
<evidence type="ECO:0000269" key="10">
    <source>
    </source>
</evidence>
<evidence type="ECO:0000269" key="11">
    <source>
    </source>
</evidence>
<evidence type="ECO:0000269" key="12">
    <source>
    </source>
</evidence>
<evidence type="ECO:0000303" key="13">
    <source>
    </source>
</evidence>
<evidence type="ECO:0000303" key="14">
    <source>
    </source>
</evidence>
<evidence type="ECO:0000303" key="15">
    <source>
    </source>
</evidence>
<evidence type="ECO:0000305" key="16"/>
<evidence type="ECO:0000305" key="17">
    <source>
    </source>
</evidence>
<evidence type="ECO:0000305" key="18">
    <source>
    </source>
</evidence>
<evidence type="ECO:0007829" key="19">
    <source>
        <dbReference type="PDB" id="4H2D"/>
    </source>
</evidence>
<accession>Q9UHB4</accession>
<accession>D3YTG6</accession>
<accession>D3YTH9</accession>
<accession>Q5VSG4</accession>
<accession>Q86US9</accession>
<accession>Q96BC6</accession>
<organism>
    <name type="scientific">Homo sapiens</name>
    <name type="common">Human</name>
    <dbReference type="NCBI Taxonomy" id="9606"/>
    <lineage>
        <taxon>Eukaryota</taxon>
        <taxon>Metazoa</taxon>
        <taxon>Chordata</taxon>
        <taxon>Craniata</taxon>
        <taxon>Vertebrata</taxon>
        <taxon>Euteleostomi</taxon>
        <taxon>Mammalia</taxon>
        <taxon>Eutheria</taxon>
        <taxon>Euarchontoglires</taxon>
        <taxon>Primates</taxon>
        <taxon>Haplorrhini</taxon>
        <taxon>Catarrhini</taxon>
        <taxon>Hominidae</taxon>
        <taxon>Homo</taxon>
    </lineage>
</organism>
<reference key="1">
    <citation type="journal article" date="2000" name="J. Biol. Chem.">
        <title>Cloning and characterization of a novel human dual flavin reductase.</title>
        <authorList>
            <person name="Paine M.J."/>
            <person name="Garner A.P."/>
            <person name="Powell D."/>
            <person name="Sibbald J."/>
            <person name="Sales M."/>
            <person name="Pratt N."/>
            <person name="Smith T."/>
            <person name="Tew D.G."/>
            <person name="Wolf C.R."/>
        </authorList>
    </citation>
    <scope>NUCLEOTIDE SEQUENCE [MRNA] (ISOFORM 1)</scope>
    <scope>FUNCTION</scope>
    <scope>COFACTOR</scope>
    <scope>BIOPHYSICOCHEMICAL PROPERTIES</scope>
    <scope>SUBCELLULAR LOCATION</scope>
</reference>
<reference key="2">
    <citation type="journal article" date="2003" name="J. Biol. Chem.">
        <title>Coordinate expression of NADPH-dependent flavin reductase, Fre-1, and Hint-related 7meGMP-directed hydrolase, DCS-1.</title>
        <authorList>
            <person name="Kwasnicka D.A."/>
            <person name="Krakowiak A."/>
            <person name="Thacker C."/>
            <person name="Brenner C."/>
            <person name="Vincent S.R."/>
        </authorList>
    </citation>
    <scope>NUCLEOTIDE SEQUENCE [MRNA] (ISOFORM 2)</scope>
    <scope>SUBCELLULAR LOCATION</scope>
    <scope>TISSUE SPECIFICITY</scope>
    <source>
        <tissue>Brain</tissue>
    </source>
</reference>
<reference key="3">
    <citation type="journal article" date="2004" name="Nat. Genet.">
        <title>Complete sequencing and characterization of 21,243 full-length human cDNAs.</title>
        <authorList>
            <person name="Ota T."/>
            <person name="Suzuki Y."/>
            <person name="Nishikawa T."/>
            <person name="Otsuki T."/>
            <person name="Sugiyama T."/>
            <person name="Irie R."/>
            <person name="Wakamatsu A."/>
            <person name="Hayashi K."/>
            <person name="Sato H."/>
            <person name="Nagai K."/>
            <person name="Kimura K."/>
            <person name="Makita H."/>
            <person name="Sekine M."/>
            <person name="Obayashi M."/>
            <person name="Nishi T."/>
            <person name="Shibahara T."/>
            <person name="Tanaka T."/>
            <person name="Ishii S."/>
            <person name="Yamamoto J."/>
            <person name="Saito K."/>
            <person name="Kawai Y."/>
            <person name="Isono Y."/>
            <person name="Nakamura Y."/>
            <person name="Nagahari K."/>
            <person name="Murakami K."/>
            <person name="Yasuda T."/>
            <person name="Iwayanagi T."/>
            <person name="Wagatsuma M."/>
            <person name="Shiratori A."/>
            <person name="Sudo H."/>
            <person name="Hosoiri T."/>
            <person name="Kaku Y."/>
            <person name="Kodaira H."/>
            <person name="Kondo H."/>
            <person name="Sugawara M."/>
            <person name="Takahashi M."/>
            <person name="Kanda K."/>
            <person name="Yokoi T."/>
            <person name="Furuya T."/>
            <person name="Kikkawa E."/>
            <person name="Omura Y."/>
            <person name="Abe K."/>
            <person name="Kamihara K."/>
            <person name="Katsuta N."/>
            <person name="Sato K."/>
            <person name="Tanikawa M."/>
            <person name="Yamazaki M."/>
            <person name="Ninomiya K."/>
            <person name="Ishibashi T."/>
            <person name="Yamashita H."/>
            <person name="Murakawa K."/>
            <person name="Fujimori K."/>
            <person name="Tanai H."/>
            <person name="Kimata M."/>
            <person name="Watanabe M."/>
            <person name="Hiraoka S."/>
            <person name="Chiba Y."/>
            <person name="Ishida S."/>
            <person name="Ono Y."/>
            <person name="Takiguchi S."/>
            <person name="Watanabe S."/>
            <person name="Yosida M."/>
            <person name="Hotuta T."/>
            <person name="Kusano J."/>
            <person name="Kanehori K."/>
            <person name="Takahashi-Fujii A."/>
            <person name="Hara H."/>
            <person name="Tanase T.-O."/>
            <person name="Nomura Y."/>
            <person name="Togiya S."/>
            <person name="Komai F."/>
            <person name="Hara R."/>
            <person name="Takeuchi K."/>
            <person name="Arita M."/>
            <person name="Imose N."/>
            <person name="Musashino K."/>
            <person name="Yuuki H."/>
            <person name="Oshima A."/>
            <person name="Sasaki N."/>
            <person name="Aotsuka S."/>
            <person name="Yoshikawa Y."/>
            <person name="Matsunawa H."/>
            <person name="Ichihara T."/>
            <person name="Shiohata N."/>
            <person name="Sano S."/>
            <person name="Moriya S."/>
            <person name="Momiyama H."/>
            <person name="Satoh N."/>
            <person name="Takami S."/>
            <person name="Terashima Y."/>
            <person name="Suzuki O."/>
            <person name="Nakagawa S."/>
            <person name="Senoh A."/>
            <person name="Mizoguchi H."/>
            <person name="Goto Y."/>
            <person name="Shimizu F."/>
            <person name="Wakebe H."/>
            <person name="Hishigaki H."/>
            <person name="Watanabe T."/>
            <person name="Sugiyama A."/>
            <person name="Takemoto M."/>
            <person name="Kawakami B."/>
            <person name="Yamazaki M."/>
            <person name="Watanabe K."/>
            <person name="Kumagai A."/>
            <person name="Itakura S."/>
            <person name="Fukuzumi Y."/>
            <person name="Fujimori Y."/>
            <person name="Komiyama M."/>
            <person name="Tashiro H."/>
            <person name="Tanigami A."/>
            <person name="Fujiwara T."/>
            <person name="Ono T."/>
            <person name="Yamada K."/>
            <person name="Fujii Y."/>
            <person name="Ozaki K."/>
            <person name="Hirao M."/>
            <person name="Ohmori Y."/>
            <person name="Kawabata A."/>
            <person name="Hikiji T."/>
            <person name="Kobatake N."/>
            <person name="Inagaki H."/>
            <person name="Ikema Y."/>
            <person name="Okamoto S."/>
            <person name="Okitani R."/>
            <person name="Kawakami T."/>
            <person name="Noguchi S."/>
            <person name="Itoh T."/>
            <person name="Shigeta K."/>
            <person name="Senba T."/>
            <person name="Matsumura K."/>
            <person name="Nakajima Y."/>
            <person name="Mizuno T."/>
            <person name="Morinaga M."/>
            <person name="Sasaki M."/>
            <person name="Togashi T."/>
            <person name="Oyama M."/>
            <person name="Hata H."/>
            <person name="Watanabe M."/>
            <person name="Komatsu T."/>
            <person name="Mizushima-Sugano J."/>
            <person name="Satoh T."/>
            <person name="Shirai Y."/>
            <person name="Takahashi Y."/>
            <person name="Nakagawa K."/>
            <person name="Okumura K."/>
            <person name="Nagase T."/>
            <person name="Nomura N."/>
            <person name="Kikuchi H."/>
            <person name="Masuho Y."/>
            <person name="Yamashita R."/>
            <person name="Nakai K."/>
            <person name="Yada T."/>
            <person name="Nakamura Y."/>
            <person name="Ohara O."/>
            <person name="Isogai T."/>
            <person name="Sugano S."/>
        </authorList>
    </citation>
    <scope>NUCLEOTIDE SEQUENCE [LARGE SCALE MRNA] (ISOFORMS 1 AND 3)</scope>
    <source>
        <tissue>Hippocampus</tissue>
        <tissue>Umbilical vein endothelial cell</tissue>
    </source>
</reference>
<reference key="4">
    <citation type="journal article" date="2004" name="Nature">
        <title>DNA sequence and analysis of human chromosome 9.</title>
        <authorList>
            <person name="Humphray S.J."/>
            <person name="Oliver K."/>
            <person name="Hunt A.R."/>
            <person name="Plumb R.W."/>
            <person name="Loveland J.E."/>
            <person name="Howe K.L."/>
            <person name="Andrews T.D."/>
            <person name="Searle S."/>
            <person name="Hunt S.E."/>
            <person name="Scott C.E."/>
            <person name="Jones M.C."/>
            <person name="Ainscough R."/>
            <person name="Almeida J.P."/>
            <person name="Ambrose K.D."/>
            <person name="Ashwell R.I.S."/>
            <person name="Babbage A.K."/>
            <person name="Babbage S."/>
            <person name="Bagguley C.L."/>
            <person name="Bailey J."/>
            <person name="Banerjee R."/>
            <person name="Barker D.J."/>
            <person name="Barlow K.F."/>
            <person name="Bates K."/>
            <person name="Beasley H."/>
            <person name="Beasley O."/>
            <person name="Bird C.P."/>
            <person name="Bray-Allen S."/>
            <person name="Brown A.J."/>
            <person name="Brown J.Y."/>
            <person name="Burford D."/>
            <person name="Burrill W."/>
            <person name="Burton J."/>
            <person name="Carder C."/>
            <person name="Carter N.P."/>
            <person name="Chapman J.C."/>
            <person name="Chen Y."/>
            <person name="Clarke G."/>
            <person name="Clark S.Y."/>
            <person name="Clee C.M."/>
            <person name="Clegg S."/>
            <person name="Collier R.E."/>
            <person name="Corby N."/>
            <person name="Crosier M."/>
            <person name="Cummings A.T."/>
            <person name="Davies J."/>
            <person name="Dhami P."/>
            <person name="Dunn M."/>
            <person name="Dutta I."/>
            <person name="Dyer L.W."/>
            <person name="Earthrowl M.E."/>
            <person name="Faulkner L."/>
            <person name="Fleming C.J."/>
            <person name="Frankish A."/>
            <person name="Frankland J.A."/>
            <person name="French L."/>
            <person name="Fricker D.G."/>
            <person name="Garner P."/>
            <person name="Garnett J."/>
            <person name="Ghori J."/>
            <person name="Gilbert J.G.R."/>
            <person name="Glison C."/>
            <person name="Grafham D.V."/>
            <person name="Gribble S."/>
            <person name="Griffiths C."/>
            <person name="Griffiths-Jones S."/>
            <person name="Grocock R."/>
            <person name="Guy J."/>
            <person name="Hall R.E."/>
            <person name="Hammond S."/>
            <person name="Harley J.L."/>
            <person name="Harrison E.S.I."/>
            <person name="Hart E.A."/>
            <person name="Heath P.D."/>
            <person name="Henderson C.D."/>
            <person name="Hopkins B.L."/>
            <person name="Howard P.J."/>
            <person name="Howden P.J."/>
            <person name="Huckle E."/>
            <person name="Johnson C."/>
            <person name="Johnson D."/>
            <person name="Joy A.A."/>
            <person name="Kay M."/>
            <person name="Keenan S."/>
            <person name="Kershaw J.K."/>
            <person name="Kimberley A.M."/>
            <person name="King A."/>
            <person name="Knights A."/>
            <person name="Laird G.K."/>
            <person name="Langford C."/>
            <person name="Lawlor S."/>
            <person name="Leongamornlert D.A."/>
            <person name="Leversha M."/>
            <person name="Lloyd C."/>
            <person name="Lloyd D.M."/>
            <person name="Lovell J."/>
            <person name="Martin S."/>
            <person name="Mashreghi-Mohammadi M."/>
            <person name="Matthews L."/>
            <person name="McLaren S."/>
            <person name="McLay K.E."/>
            <person name="McMurray A."/>
            <person name="Milne S."/>
            <person name="Nickerson T."/>
            <person name="Nisbett J."/>
            <person name="Nordsiek G."/>
            <person name="Pearce A.V."/>
            <person name="Peck A.I."/>
            <person name="Porter K.M."/>
            <person name="Pandian R."/>
            <person name="Pelan S."/>
            <person name="Phillimore B."/>
            <person name="Povey S."/>
            <person name="Ramsey Y."/>
            <person name="Rand V."/>
            <person name="Scharfe M."/>
            <person name="Sehra H.K."/>
            <person name="Shownkeen R."/>
            <person name="Sims S.K."/>
            <person name="Skuce C.D."/>
            <person name="Smith M."/>
            <person name="Steward C.A."/>
            <person name="Swarbreck D."/>
            <person name="Sycamore N."/>
            <person name="Tester J."/>
            <person name="Thorpe A."/>
            <person name="Tracey A."/>
            <person name="Tromans A."/>
            <person name="Thomas D.W."/>
            <person name="Wall M."/>
            <person name="Wallis J.M."/>
            <person name="West A.P."/>
            <person name="Whitehead S.L."/>
            <person name="Willey D.L."/>
            <person name="Williams S.A."/>
            <person name="Wilming L."/>
            <person name="Wray P.W."/>
            <person name="Young L."/>
            <person name="Ashurst J.L."/>
            <person name="Coulson A."/>
            <person name="Blocker H."/>
            <person name="Durbin R.M."/>
            <person name="Sulston J.E."/>
            <person name="Hubbard T."/>
            <person name="Jackson M.J."/>
            <person name="Bentley D.R."/>
            <person name="Beck S."/>
            <person name="Rogers J."/>
            <person name="Dunham I."/>
        </authorList>
    </citation>
    <scope>NUCLEOTIDE SEQUENCE [LARGE SCALE GENOMIC DNA]</scope>
</reference>
<reference key="5">
    <citation type="journal article" date="2004" name="Genome Res.">
        <title>The status, quality, and expansion of the NIH full-length cDNA project: the Mammalian Gene Collection (MGC).</title>
        <authorList>
            <consortium name="The MGC Project Team"/>
        </authorList>
    </citation>
    <scope>NUCLEOTIDE SEQUENCE [LARGE SCALE MRNA] (ISOFORM 1)</scope>
    <scope>VARIANT ILE-522</scope>
    <source>
        <tissue>Brain</tissue>
        <tissue>Skin</tissue>
    </source>
</reference>
<reference key="6">
    <citation type="journal article" date="2003" name="J. Biol. Chem.">
        <title>Redundancy in the pathway for redox regulation of mammalian methionine synthase: reductive activation by the dual flavoprotein, novel reductase 1.</title>
        <authorList>
            <person name="Olteanu H."/>
            <person name="Banerjee R."/>
        </authorList>
    </citation>
    <scope>PROTEIN SEQUENCE OF 1-8</scope>
    <scope>FUNCTION</scope>
    <scope>BIOPHYSICOCHEMICAL PROPERTIES</scope>
</reference>
<reference key="7">
    <citation type="journal article" date="2003" name="Eur. J. Biochem.">
        <title>Determination of the redox potentials and electron transfer properties of the FAD- and FMN-binding domains of the human oxidoreductase NR1.</title>
        <authorList>
            <person name="Finn R.D."/>
            <person name="Basran J."/>
            <person name="Roitel O."/>
            <person name="Wolf C.R."/>
            <person name="Munro A.W."/>
            <person name="Paine M.J."/>
            <person name="Scrutton N.S."/>
        </authorList>
    </citation>
    <scope>FUNCTION</scope>
    <scope>BIOPHYSICOCHEMICAL PROPERTIES</scope>
</reference>
<reference key="8">
    <citation type="journal article" date="2005" name="Biochem. Biophys. Res. Commun.">
        <title>Role of a novel dual flavin reductase (NR1) and an associated histidine triad protein (DCS-1) in menadione-induced cytotoxicity.</title>
        <authorList>
            <person name="Kwasnicka-Crawford D.A."/>
            <person name="Vincent S.R."/>
        </authorList>
    </citation>
    <scope>INTERACTION WITH DCPS</scope>
    <scope>CYTOTOXICITY</scope>
</reference>
<reference key="9">
    <citation type="journal article" date="2010" name="Nat. Chem. Biol.">
        <title>Tah18 transfers electrons to Dre2 in cytosolic iron-sulfur protein biogenesis.</title>
        <authorList>
            <person name="Netz D.J."/>
            <person name="Stumpfig M."/>
            <person name="Dore C."/>
            <person name="Muhlenhoff U."/>
            <person name="Pierik A.J."/>
            <person name="Lill R."/>
        </authorList>
    </citation>
    <scope>FUNCTION</scope>
    <scope>INTERACTION WITH CIAPIN1</scope>
</reference>
<reference key="10">
    <citation type="journal article" date="2011" name="BMC Syst. Biol.">
        <title>Initial characterization of the human central proteome.</title>
        <authorList>
            <person name="Burkard T.R."/>
            <person name="Planyavsky M."/>
            <person name="Kaupe I."/>
            <person name="Breitwieser F.P."/>
            <person name="Buerckstuemmer T."/>
            <person name="Bennett K.L."/>
            <person name="Superti-Furga G."/>
            <person name="Colinge J."/>
        </authorList>
    </citation>
    <scope>IDENTIFICATION BY MASS SPECTROMETRY [LARGE SCALE ANALYSIS]</scope>
</reference>
<reference key="11">
    <citation type="journal article" date="2017" name="J. Am. Chem. Soc.">
        <title>Anamorsin/Ndor1 Complex Reduces [2Fe-2S]-MitoNEET via a Transient Protein-Protein Interaction.</title>
        <authorList>
            <person name="Camponeschi F."/>
            <person name="Ciofi-Baffoni S."/>
            <person name="Banci L."/>
        </authorList>
    </citation>
    <scope>FUNCTION</scope>
    <scope>CATALYTIC ACTIVITY</scope>
</reference>
<reference key="12">
    <citation type="journal article" date="2013" name="Proc. Natl. Acad. Sci. U.S.A.">
        <title>Molecular view of an electron transfer process essential for iron-sulfur protein biogenesis.</title>
        <authorList>
            <person name="Banci L."/>
            <person name="Bertini I."/>
            <person name="Calderone V."/>
            <person name="Ciofi-Baffoni S."/>
            <person name="Giachetti A."/>
            <person name="Jaiswal D."/>
            <person name="Mikolajczyk M."/>
            <person name="Piccioli M."/>
            <person name="Winkelmann J."/>
        </authorList>
    </citation>
    <scope>X-RAY CRYSTALLOGRAPHY (1.8 ANGSTROMS) OF 1-161 IN COMPLEX WITH FMN</scope>
    <scope>FUNCTION</scope>
    <scope>COFACTOR</scope>
    <scope>INTERACTION WITH CIAPIN1</scope>
    <scope>CATALYTIC ACTIVITY</scope>
</reference>
<reference key="13">
    <citation type="journal article" date="2005" name="Pharmacogenet. Genomics">
        <title>Identification of a functionally impaired allele of human novel oxidoreductase 1 (NDOR1), NDOR1*1.</title>
        <authorList>
            <person name="Finn R.D."/>
            <person name="Wilkie M."/>
            <person name="Smith G."/>
            <person name="Paine M.J."/>
        </authorList>
    </citation>
    <scope>VARIANT ILE-522</scope>
    <scope>CHARACTERIZATION OF VARIANT ILE-522</scope>
    <scope>FUNCTION</scope>
    <scope>BIOPHYSICOCHEMICAL PROPERTIES</scope>
</reference>
<proteinExistence type="evidence at protein level"/>
<sequence length="597" mass="66763">MPSPQLLVLFGSQTGTAQDVSERLGREARRRRLGCRVQALDSYPVVNLINEPLVIFVCATTGQGDPPDNMKNFWRFIFRKNLPSTALCQMDFAVLGLGDSSYAKFNFVAKKLHRRLLQLGGSALLPVCLGDDQHELGPDAAVDPWLRDLWDRVLGLYPPPPGLTEIPPGVPLPSKFTLLFLQEAPSTGSEGQRVAHPGSQEPPSESKPFLAPMISNQRVTGPSHFQDVRLIEFDILGSGISFAAGDVVLIQPSNSAAHVQRFCQVLGLDPDQLFMLQPREPDVSSPTRLPQPCSMRHLVSHYLDIASVPRRSFFELLACLSLHELEREKLLEFSSAQGQEELFEYCNRPRRTILEVLCDFPHTAAAIPPDYLLDLIPVIRPRAFSIASSLLTHPSRLQILVAVVQFQTRLKEPRRGLCSSWLASLDPGQGPVRVPLWVRPGSLAFPETPDTPVIMVGPGTGVAPFRAAIQERVAQGQTGNFLFFGCRWRDQDFYWEAEWQELEKRDCLTLIPAFSREQEQKVYVQHRLRELGSLVWELLDRQGAYFYLAGNAKSMPADVSEALMSIFQEEGGLCSPDAAAYLARLQQTRRFQTETWA</sequence>